<name>CH602_SALTO</name>
<sequence>MAKILSFSDDARHQLEHGVNALADAVKVTLGPRGRNVVLDKKFGAPTITNDGVTIAKEIELTDPHENLGAQLVKEVATKTNDVAGDGTTTATVLAQALVREGLRNVAAGANPTGLKRGIDAAATKVSEALLGKAVEVSDKAAIAHVATVSAQDSTIGELIAEAMERVGRDGVITVEEGSTLATELDVTEGLQFDKGFISPNFVTDAEGQESVLEDPYILITTQKISAIEELLPLLEKVLQDSKPLLIIAEDVEGQALSTLVVNALRKTMKVCAVKAPGFGDRRKAMLQDMAILTGAELVAPELGYKLDQVGLEVLGTARRVVVDKETTTVVDGGGQAADAADRVAQIRKEIEASDSEWDREKLAERLAKLSGGVAVIRAGAATEVEMKERKHRIEDAIAATKAAVEEGTIPGGGAALAQVLPALDDDLGLDGDEKVGVSIVRKALVEPLRWIAQNAGHDGYVVVQKVVDKDWGHGLDAATGEYVDLAKAGILDPVKVTRNAVANAASIAGLLLTTESLVVDKPQEPEPAAGGHGHGHQHGPGF</sequence>
<reference key="1">
    <citation type="journal article" date="2007" name="Proc. Natl. Acad. Sci. U.S.A.">
        <title>Genome sequencing reveals complex secondary metabolome in the marine actinomycete Salinispora tropica.</title>
        <authorList>
            <person name="Udwary D.W."/>
            <person name="Zeigler L."/>
            <person name="Asolkar R.N."/>
            <person name="Singan V."/>
            <person name="Lapidus A."/>
            <person name="Fenical W."/>
            <person name="Jensen P.R."/>
            <person name="Moore B.S."/>
        </authorList>
    </citation>
    <scope>NUCLEOTIDE SEQUENCE [LARGE SCALE GENOMIC DNA]</scope>
    <source>
        <strain>ATCC BAA-916 / DSM 44818 / JCM 13857 / NBRC 105044 / CNB-440</strain>
    </source>
</reference>
<evidence type="ECO:0000255" key="1">
    <source>
        <dbReference type="HAMAP-Rule" id="MF_00600"/>
    </source>
</evidence>
<evidence type="ECO:0000256" key="2">
    <source>
        <dbReference type="SAM" id="MobiDB-lite"/>
    </source>
</evidence>
<dbReference type="EC" id="5.6.1.7" evidence="1"/>
<dbReference type="EMBL" id="CP000667">
    <property type="protein sequence ID" value="ABP56271.1"/>
    <property type="molecule type" value="Genomic_DNA"/>
</dbReference>
<dbReference type="RefSeq" id="WP_012015046.1">
    <property type="nucleotide sequence ID" value="NC_009380.1"/>
</dbReference>
<dbReference type="SMR" id="A4XBH2"/>
<dbReference type="STRING" id="369723.Strop_3841"/>
<dbReference type="KEGG" id="stp:Strop_3841"/>
<dbReference type="PATRIC" id="fig|369723.5.peg.3965"/>
<dbReference type="eggNOG" id="COG0459">
    <property type="taxonomic scope" value="Bacteria"/>
</dbReference>
<dbReference type="HOGENOM" id="CLU_016503_3_0_11"/>
<dbReference type="Proteomes" id="UP000000235">
    <property type="component" value="Chromosome"/>
</dbReference>
<dbReference type="GO" id="GO:0005737">
    <property type="term" value="C:cytoplasm"/>
    <property type="evidence" value="ECO:0007669"/>
    <property type="project" value="UniProtKB-SubCell"/>
</dbReference>
<dbReference type="GO" id="GO:0005524">
    <property type="term" value="F:ATP binding"/>
    <property type="evidence" value="ECO:0007669"/>
    <property type="project" value="UniProtKB-UniRule"/>
</dbReference>
<dbReference type="GO" id="GO:0140662">
    <property type="term" value="F:ATP-dependent protein folding chaperone"/>
    <property type="evidence" value="ECO:0007669"/>
    <property type="project" value="InterPro"/>
</dbReference>
<dbReference type="GO" id="GO:0016853">
    <property type="term" value="F:isomerase activity"/>
    <property type="evidence" value="ECO:0007669"/>
    <property type="project" value="UniProtKB-KW"/>
</dbReference>
<dbReference type="GO" id="GO:0051082">
    <property type="term" value="F:unfolded protein binding"/>
    <property type="evidence" value="ECO:0007669"/>
    <property type="project" value="UniProtKB-UniRule"/>
</dbReference>
<dbReference type="GO" id="GO:0042026">
    <property type="term" value="P:protein refolding"/>
    <property type="evidence" value="ECO:0007669"/>
    <property type="project" value="UniProtKB-UniRule"/>
</dbReference>
<dbReference type="CDD" id="cd03344">
    <property type="entry name" value="GroEL"/>
    <property type="match status" value="1"/>
</dbReference>
<dbReference type="FunFam" id="3.50.7.10:FF:000001">
    <property type="entry name" value="60 kDa chaperonin"/>
    <property type="match status" value="1"/>
</dbReference>
<dbReference type="Gene3D" id="3.50.7.10">
    <property type="entry name" value="GroEL"/>
    <property type="match status" value="1"/>
</dbReference>
<dbReference type="Gene3D" id="1.10.560.10">
    <property type="entry name" value="GroEL-like equatorial domain"/>
    <property type="match status" value="1"/>
</dbReference>
<dbReference type="Gene3D" id="3.30.260.10">
    <property type="entry name" value="TCP-1-like chaperonin intermediate domain"/>
    <property type="match status" value="1"/>
</dbReference>
<dbReference type="HAMAP" id="MF_00600">
    <property type="entry name" value="CH60"/>
    <property type="match status" value="1"/>
</dbReference>
<dbReference type="InterPro" id="IPR018370">
    <property type="entry name" value="Chaperonin_Cpn60_CS"/>
</dbReference>
<dbReference type="InterPro" id="IPR001844">
    <property type="entry name" value="Cpn60/GroEL"/>
</dbReference>
<dbReference type="InterPro" id="IPR002423">
    <property type="entry name" value="Cpn60/GroEL/TCP-1"/>
</dbReference>
<dbReference type="InterPro" id="IPR027409">
    <property type="entry name" value="GroEL-like_apical_dom_sf"/>
</dbReference>
<dbReference type="InterPro" id="IPR027413">
    <property type="entry name" value="GROEL-like_equatorial_sf"/>
</dbReference>
<dbReference type="InterPro" id="IPR027410">
    <property type="entry name" value="TCP-1-like_intermed_sf"/>
</dbReference>
<dbReference type="NCBIfam" id="TIGR02348">
    <property type="entry name" value="GroEL"/>
    <property type="match status" value="1"/>
</dbReference>
<dbReference type="NCBIfam" id="NF000592">
    <property type="entry name" value="PRK00013.1"/>
    <property type="match status" value="1"/>
</dbReference>
<dbReference type="NCBIfam" id="NF009487">
    <property type="entry name" value="PRK12849.1"/>
    <property type="match status" value="1"/>
</dbReference>
<dbReference type="NCBIfam" id="NF009488">
    <property type="entry name" value="PRK12850.1"/>
    <property type="match status" value="1"/>
</dbReference>
<dbReference type="NCBIfam" id="NF009489">
    <property type="entry name" value="PRK12851.1"/>
    <property type="match status" value="1"/>
</dbReference>
<dbReference type="PANTHER" id="PTHR45633">
    <property type="entry name" value="60 KDA HEAT SHOCK PROTEIN, MITOCHONDRIAL"/>
    <property type="match status" value="1"/>
</dbReference>
<dbReference type="Pfam" id="PF00118">
    <property type="entry name" value="Cpn60_TCP1"/>
    <property type="match status" value="1"/>
</dbReference>
<dbReference type="PRINTS" id="PR00298">
    <property type="entry name" value="CHAPERONIN60"/>
</dbReference>
<dbReference type="SUPFAM" id="SSF52029">
    <property type="entry name" value="GroEL apical domain-like"/>
    <property type="match status" value="1"/>
</dbReference>
<dbReference type="SUPFAM" id="SSF48592">
    <property type="entry name" value="GroEL equatorial domain-like"/>
    <property type="match status" value="1"/>
</dbReference>
<dbReference type="SUPFAM" id="SSF54849">
    <property type="entry name" value="GroEL-intermediate domain like"/>
    <property type="match status" value="1"/>
</dbReference>
<dbReference type="PROSITE" id="PS00296">
    <property type="entry name" value="CHAPERONINS_CPN60"/>
    <property type="match status" value="1"/>
</dbReference>
<protein>
    <recommendedName>
        <fullName evidence="1">Chaperonin GroEL 2</fullName>
        <ecNumber evidence="1">5.6.1.7</ecNumber>
    </recommendedName>
    <alternativeName>
        <fullName evidence="1">60 kDa chaperonin 2</fullName>
    </alternativeName>
    <alternativeName>
        <fullName evidence="1">Chaperonin-60 2</fullName>
        <shortName evidence="1">Cpn60 2</shortName>
    </alternativeName>
</protein>
<gene>
    <name evidence="1" type="primary">groEL2</name>
    <name evidence="1" type="synonym">groL2</name>
    <name type="ordered locus">Strop_3841</name>
</gene>
<accession>A4XBH2</accession>
<feature type="chain" id="PRO_0000332073" description="Chaperonin GroEL 2">
    <location>
        <begin position="1"/>
        <end position="543"/>
    </location>
</feature>
<feature type="region of interest" description="Disordered" evidence="2">
    <location>
        <begin position="523"/>
        <end position="543"/>
    </location>
</feature>
<feature type="compositionally biased region" description="Basic residues" evidence="2">
    <location>
        <begin position="534"/>
        <end position="543"/>
    </location>
</feature>
<feature type="binding site" evidence="1">
    <location>
        <begin position="29"/>
        <end position="32"/>
    </location>
    <ligand>
        <name>ATP</name>
        <dbReference type="ChEBI" id="CHEBI:30616"/>
    </ligand>
</feature>
<feature type="binding site" evidence="1">
    <location>
        <begin position="86"/>
        <end position="90"/>
    </location>
    <ligand>
        <name>ATP</name>
        <dbReference type="ChEBI" id="CHEBI:30616"/>
    </ligand>
</feature>
<feature type="binding site" evidence="1">
    <location>
        <position position="413"/>
    </location>
    <ligand>
        <name>ATP</name>
        <dbReference type="ChEBI" id="CHEBI:30616"/>
    </ligand>
</feature>
<feature type="binding site" evidence="1">
    <location>
        <begin position="477"/>
        <end position="479"/>
    </location>
    <ligand>
        <name>ATP</name>
        <dbReference type="ChEBI" id="CHEBI:30616"/>
    </ligand>
</feature>
<feature type="binding site" evidence="1">
    <location>
        <position position="493"/>
    </location>
    <ligand>
        <name>ATP</name>
        <dbReference type="ChEBI" id="CHEBI:30616"/>
    </ligand>
</feature>
<organism>
    <name type="scientific">Salinispora tropica (strain ATCC BAA-916 / DSM 44818 / JCM 13857 / NBRC 105044 / CNB-440)</name>
    <dbReference type="NCBI Taxonomy" id="369723"/>
    <lineage>
        <taxon>Bacteria</taxon>
        <taxon>Bacillati</taxon>
        <taxon>Actinomycetota</taxon>
        <taxon>Actinomycetes</taxon>
        <taxon>Micromonosporales</taxon>
        <taxon>Micromonosporaceae</taxon>
        <taxon>Salinispora</taxon>
    </lineage>
</organism>
<comment type="function">
    <text evidence="1">Together with its co-chaperonin GroES, plays an essential role in assisting protein folding. The GroEL-GroES system forms a nano-cage that allows encapsulation of the non-native substrate proteins and provides a physical environment optimized to promote and accelerate protein folding.</text>
</comment>
<comment type="catalytic activity">
    <reaction evidence="1">
        <text>ATP + H2O + a folded polypeptide = ADP + phosphate + an unfolded polypeptide.</text>
        <dbReference type="EC" id="5.6.1.7"/>
    </reaction>
</comment>
<comment type="subunit">
    <text evidence="1">Forms a cylinder of 14 subunits composed of two heptameric rings stacked back-to-back. Interacts with the co-chaperonin GroES.</text>
</comment>
<comment type="subcellular location">
    <subcellularLocation>
        <location evidence="1">Cytoplasm</location>
    </subcellularLocation>
</comment>
<comment type="similarity">
    <text evidence="1">Belongs to the chaperonin (HSP60) family.</text>
</comment>
<keyword id="KW-0067">ATP-binding</keyword>
<keyword id="KW-0143">Chaperone</keyword>
<keyword id="KW-0963">Cytoplasm</keyword>
<keyword id="KW-0413">Isomerase</keyword>
<keyword id="KW-0547">Nucleotide-binding</keyword>
<keyword id="KW-1185">Reference proteome</keyword>
<proteinExistence type="inferred from homology"/>